<feature type="chain" id="PRO_1000191131" description="Adenylate kinase">
    <location>
        <begin position="1"/>
        <end position="191"/>
    </location>
</feature>
<feature type="region of interest" description="NMP" evidence="1">
    <location>
        <begin position="30"/>
        <end position="59"/>
    </location>
</feature>
<feature type="region of interest" description="LID" evidence="1">
    <location>
        <begin position="126"/>
        <end position="136"/>
    </location>
</feature>
<feature type="binding site" evidence="1">
    <location>
        <begin position="10"/>
        <end position="15"/>
    </location>
    <ligand>
        <name>ATP</name>
        <dbReference type="ChEBI" id="CHEBI:30616"/>
    </ligand>
</feature>
<feature type="binding site" evidence="1">
    <location>
        <position position="31"/>
    </location>
    <ligand>
        <name>AMP</name>
        <dbReference type="ChEBI" id="CHEBI:456215"/>
    </ligand>
</feature>
<feature type="binding site" evidence="1">
    <location>
        <position position="36"/>
    </location>
    <ligand>
        <name>AMP</name>
        <dbReference type="ChEBI" id="CHEBI:456215"/>
    </ligand>
</feature>
<feature type="binding site" evidence="1">
    <location>
        <begin position="57"/>
        <end position="59"/>
    </location>
    <ligand>
        <name>AMP</name>
        <dbReference type="ChEBI" id="CHEBI:456215"/>
    </ligand>
</feature>
<feature type="binding site" evidence="1">
    <location>
        <begin position="85"/>
        <end position="88"/>
    </location>
    <ligand>
        <name>AMP</name>
        <dbReference type="ChEBI" id="CHEBI:456215"/>
    </ligand>
</feature>
<feature type="binding site" evidence="1">
    <location>
        <position position="92"/>
    </location>
    <ligand>
        <name>AMP</name>
        <dbReference type="ChEBI" id="CHEBI:456215"/>
    </ligand>
</feature>
<feature type="binding site" evidence="1">
    <location>
        <position position="127"/>
    </location>
    <ligand>
        <name>ATP</name>
        <dbReference type="ChEBI" id="CHEBI:30616"/>
    </ligand>
</feature>
<feature type="binding site" evidence="1">
    <location>
        <position position="133"/>
    </location>
    <ligand>
        <name>AMP</name>
        <dbReference type="ChEBI" id="CHEBI:456215"/>
    </ligand>
</feature>
<feature type="binding site" evidence="1">
    <location>
        <position position="144"/>
    </location>
    <ligand>
        <name>AMP</name>
        <dbReference type="ChEBI" id="CHEBI:456215"/>
    </ligand>
</feature>
<feature type="binding site" evidence="1">
    <location>
        <position position="172"/>
    </location>
    <ligand>
        <name>ATP</name>
        <dbReference type="ChEBI" id="CHEBI:30616"/>
    </ligand>
</feature>
<gene>
    <name evidence="1" type="primary">adk</name>
    <name type="ordered locus">CCNA_01327</name>
</gene>
<organism>
    <name type="scientific">Caulobacter vibrioides (strain NA1000 / CB15N)</name>
    <name type="common">Caulobacter crescentus</name>
    <dbReference type="NCBI Taxonomy" id="565050"/>
    <lineage>
        <taxon>Bacteria</taxon>
        <taxon>Pseudomonadati</taxon>
        <taxon>Pseudomonadota</taxon>
        <taxon>Alphaproteobacteria</taxon>
        <taxon>Caulobacterales</taxon>
        <taxon>Caulobacteraceae</taxon>
        <taxon>Caulobacter</taxon>
    </lineage>
</organism>
<name>KAD_CAUVN</name>
<accession>B8H4F5</accession>
<reference key="1">
    <citation type="journal article" date="2010" name="J. Bacteriol.">
        <title>The genetic basis of laboratory adaptation in Caulobacter crescentus.</title>
        <authorList>
            <person name="Marks M.E."/>
            <person name="Castro-Rojas C.M."/>
            <person name="Teiling C."/>
            <person name="Du L."/>
            <person name="Kapatral V."/>
            <person name="Walunas T.L."/>
            <person name="Crosson S."/>
        </authorList>
    </citation>
    <scope>NUCLEOTIDE SEQUENCE [LARGE SCALE GENOMIC DNA]</scope>
    <source>
        <strain>NA1000 / CB15N</strain>
    </source>
</reference>
<dbReference type="EC" id="2.7.4.3" evidence="1"/>
<dbReference type="EMBL" id="CP001340">
    <property type="protein sequence ID" value="ACL94792.1"/>
    <property type="molecule type" value="Genomic_DNA"/>
</dbReference>
<dbReference type="RefSeq" id="WP_010919148.1">
    <property type="nucleotide sequence ID" value="NC_011916.1"/>
</dbReference>
<dbReference type="RefSeq" id="YP_002516700.1">
    <property type="nucleotide sequence ID" value="NC_011916.1"/>
</dbReference>
<dbReference type="SMR" id="B8H4F5"/>
<dbReference type="GeneID" id="7333059"/>
<dbReference type="KEGG" id="ccs:CCNA_01327"/>
<dbReference type="PATRIC" id="fig|565050.3.peg.1311"/>
<dbReference type="HOGENOM" id="CLU_032354_1_2_5"/>
<dbReference type="OrthoDB" id="9805030at2"/>
<dbReference type="PhylomeDB" id="B8H4F5"/>
<dbReference type="UniPathway" id="UPA00588">
    <property type="reaction ID" value="UER00649"/>
</dbReference>
<dbReference type="Proteomes" id="UP000001364">
    <property type="component" value="Chromosome"/>
</dbReference>
<dbReference type="GO" id="GO:0005737">
    <property type="term" value="C:cytoplasm"/>
    <property type="evidence" value="ECO:0007669"/>
    <property type="project" value="UniProtKB-SubCell"/>
</dbReference>
<dbReference type="GO" id="GO:0004017">
    <property type="term" value="F:adenylate kinase activity"/>
    <property type="evidence" value="ECO:0007669"/>
    <property type="project" value="UniProtKB-UniRule"/>
</dbReference>
<dbReference type="GO" id="GO:0005524">
    <property type="term" value="F:ATP binding"/>
    <property type="evidence" value="ECO:0007669"/>
    <property type="project" value="UniProtKB-UniRule"/>
</dbReference>
<dbReference type="GO" id="GO:0044209">
    <property type="term" value="P:AMP salvage"/>
    <property type="evidence" value="ECO:0007669"/>
    <property type="project" value="UniProtKB-UniRule"/>
</dbReference>
<dbReference type="CDD" id="cd01428">
    <property type="entry name" value="ADK"/>
    <property type="match status" value="1"/>
</dbReference>
<dbReference type="Gene3D" id="3.40.50.300">
    <property type="entry name" value="P-loop containing nucleotide triphosphate hydrolases"/>
    <property type="match status" value="1"/>
</dbReference>
<dbReference type="HAMAP" id="MF_00235">
    <property type="entry name" value="Adenylate_kinase_Adk"/>
    <property type="match status" value="1"/>
</dbReference>
<dbReference type="InterPro" id="IPR000850">
    <property type="entry name" value="Adenylat/UMP-CMP_kin"/>
</dbReference>
<dbReference type="InterPro" id="IPR033690">
    <property type="entry name" value="Adenylat_kinase_CS"/>
</dbReference>
<dbReference type="InterPro" id="IPR027417">
    <property type="entry name" value="P-loop_NTPase"/>
</dbReference>
<dbReference type="NCBIfam" id="NF001381">
    <property type="entry name" value="PRK00279.1-3"/>
    <property type="match status" value="1"/>
</dbReference>
<dbReference type="NCBIfam" id="NF011100">
    <property type="entry name" value="PRK14527.1"/>
    <property type="match status" value="1"/>
</dbReference>
<dbReference type="NCBIfam" id="NF011104">
    <property type="entry name" value="PRK14531.1"/>
    <property type="match status" value="1"/>
</dbReference>
<dbReference type="NCBIfam" id="NF011105">
    <property type="entry name" value="PRK14532.1"/>
    <property type="match status" value="1"/>
</dbReference>
<dbReference type="PANTHER" id="PTHR23359">
    <property type="entry name" value="NUCLEOTIDE KINASE"/>
    <property type="match status" value="1"/>
</dbReference>
<dbReference type="Pfam" id="PF00406">
    <property type="entry name" value="ADK"/>
    <property type="match status" value="1"/>
</dbReference>
<dbReference type="PRINTS" id="PR00094">
    <property type="entry name" value="ADENYLTKNASE"/>
</dbReference>
<dbReference type="SUPFAM" id="SSF52540">
    <property type="entry name" value="P-loop containing nucleoside triphosphate hydrolases"/>
    <property type="match status" value="1"/>
</dbReference>
<dbReference type="PROSITE" id="PS00113">
    <property type="entry name" value="ADENYLATE_KINASE"/>
    <property type="match status" value="1"/>
</dbReference>
<keyword id="KW-0067">ATP-binding</keyword>
<keyword id="KW-0963">Cytoplasm</keyword>
<keyword id="KW-0418">Kinase</keyword>
<keyword id="KW-0545">Nucleotide biosynthesis</keyword>
<keyword id="KW-0547">Nucleotide-binding</keyword>
<keyword id="KW-1185">Reference proteome</keyword>
<keyword id="KW-0808">Transferase</keyword>
<evidence type="ECO:0000255" key="1">
    <source>
        <dbReference type="HAMAP-Rule" id="MF_00235"/>
    </source>
</evidence>
<proteinExistence type="inferred from homology"/>
<comment type="function">
    <text evidence="1">Catalyzes the reversible transfer of the terminal phosphate group between ATP and AMP. Plays an important role in cellular energy homeostasis and in adenine nucleotide metabolism.</text>
</comment>
<comment type="catalytic activity">
    <reaction evidence="1">
        <text>AMP + ATP = 2 ADP</text>
        <dbReference type="Rhea" id="RHEA:12973"/>
        <dbReference type="ChEBI" id="CHEBI:30616"/>
        <dbReference type="ChEBI" id="CHEBI:456215"/>
        <dbReference type="ChEBI" id="CHEBI:456216"/>
        <dbReference type="EC" id="2.7.4.3"/>
    </reaction>
</comment>
<comment type="pathway">
    <text evidence="1">Purine metabolism; AMP biosynthesis via salvage pathway; AMP from ADP: step 1/1.</text>
</comment>
<comment type="subunit">
    <text evidence="1">Monomer.</text>
</comment>
<comment type="subcellular location">
    <subcellularLocation>
        <location evidence="1">Cytoplasm</location>
    </subcellularLocation>
</comment>
<comment type="domain">
    <text evidence="1">Consists of three domains, a large central CORE domain and two small peripheral domains, NMPbind and LID, which undergo movements during catalysis. The LID domain closes over the site of phosphoryl transfer upon ATP binding. Assembling and dissambling the active center during each catalytic cycle provides an effective means to prevent ATP hydrolysis.</text>
</comment>
<comment type="similarity">
    <text evidence="1">Belongs to the adenylate kinase family.</text>
</comment>
<protein>
    <recommendedName>
        <fullName evidence="1">Adenylate kinase</fullName>
        <shortName evidence="1">AK</shortName>
        <ecNumber evidence="1">2.7.4.3</ecNumber>
    </recommendedName>
    <alternativeName>
        <fullName evidence="1">ATP-AMP transphosphorylase</fullName>
    </alternativeName>
    <alternativeName>
        <fullName evidence="1">ATP:AMP phosphotransferase</fullName>
    </alternativeName>
    <alternativeName>
        <fullName evidence="1">Adenylate monophosphate kinase</fullName>
    </alternativeName>
</protein>
<sequence length="191" mass="20341">MNLILFGPPAAGKGTQAKRLVTERGMVQLSTGDMLRAAIASGSELGQRVKGVLDRGELVTDEIVIALIEDRLPEAEAAGGAIFDGFPRTVAQAEALDKMLAARGQKIDVVLRLKVDEPALIERIKKRFEEQGRPDDNPEVFVTRLAAYNAQTAPLLPYYEGQGKLTELDGMGTVEAVAASIDSALEPVAAG</sequence>